<protein>
    <recommendedName>
        <fullName evidence="1">Protein NrdI</fullName>
    </recommendedName>
</protein>
<evidence type="ECO:0000255" key="1">
    <source>
        <dbReference type="HAMAP-Rule" id="MF_00128"/>
    </source>
</evidence>
<sequence>MKIIYFSFTGNVRRFIKRTELENTLEITAENCMEPVHEPFIIVTGTIGFGEVPEPVQSFLEVNHQYIRGVAASGNRNWGLNFAKAGRTISEEYNVPLLMKFELHGKNKDVIEFKNKVGNFNENHGREKVQSY</sequence>
<reference key="1">
    <citation type="journal article" date="2004" name="Proc. Natl. Acad. Sci. U.S.A.">
        <title>Complete genomes of two clinical Staphylococcus aureus strains: evidence for the rapid evolution of virulence and drug resistance.</title>
        <authorList>
            <person name="Holden M.T.G."/>
            <person name="Feil E.J."/>
            <person name="Lindsay J.A."/>
            <person name="Peacock S.J."/>
            <person name="Day N.P.J."/>
            <person name="Enright M.C."/>
            <person name="Foster T.J."/>
            <person name="Moore C.E."/>
            <person name="Hurst L."/>
            <person name="Atkin R."/>
            <person name="Barron A."/>
            <person name="Bason N."/>
            <person name="Bentley S.D."/>
            <person name="Chillingworth C."/>
            <person name="Chillingworth T."/>
            <person name="Churcher C."/>
            <person name="Clark L."/>
            <person name="Corton C."/>
            <person name="Cronin A."/>
            <person name="Doggett J."/>
            <person name="Dowd L."/>
            <person name="Feltwell T."/>
            <person name="Hance Z."/>
            <person name="Harris B."/>
            <person name="Hauser H."/>
            <person name="Holroyd S."/>
            <person name="Jagels K."/>
            <person name="James K.D."/>
            <person name="Lennard N."/>
            <person name="Line A."/>
            <person name="Mayes R."/>
            <person name="Moule S."/>
            <person name="Mungall K."/>
            <person name="Ormond D."/>
            <person name="Quail M.A."/>
            <person name="Rabbinowitsch E."/>
            <person name="Rutherford K.M."/>
            <person name="Sanders M."/>
            <person name="Sharp S."/>
            <person name="Simmonds M."/>
            <person name="Stevens K."/>
            <person name="Whitehead S."/>
            <person name="Barrell B.G."/>
            <person name="Spratt B.G."/>
            <person name="Parkhill J."/>
        </authorList>
    </citation>
    <scope>NUCLEOTIDE SEQUENCE [LARGE SCALE GENOMIC DNA]</scope>
    <source>
        <strain>MRSA252</strain>
    </source>
</reference>
<dbReference type="EMBL" id="BX571856">
    <property type="protein sequence ID" value="CAG39794.1"/>
    <property type="molecule type" value="Genomic_DNA"/>
</dbReference>
<dbReference type="RefSeq" id="WP_000692521.1">
    <property type="nucleotide sequence ID" value="NC_002952.2"/>
</dbReference>
<dbReference type="SMR" id="Q6GIR1"/>
<dbReference type="KEGG" id="sar:SAR0784"/>
<dbReference type="HOGENOM" id="CLU_114845_3_0_9"/>
<dbReference type="Proteomes" id="UP000000596">
    <property type="component" value="Chromosome"/>
</dbReference>
<dbReference type="GO" id="GO:0010181">
    <property type="term" value="F:FMN binding"/>
    <property type="evidence" value="ECO:0007669"/>
    <property type="project" value="InterPro"/>
</dbReference>
<dbReference type="GO" id="GO:0036211">
    <property type="term" value="P:protein modification process"/>
    <property type="evidence" value="ECO:0007669"/>
    <property type="project" value="InterPro"/>
</dbReference>
<dbReference type="Gene3D" id="3.40.50.360">
    <property type="match status" value="1"/>
</dbReference>
<dbReference type="HAMAP" id="MF_00128">
    <property type="entry name" value="NrdI"/>
    <property type="match status" value="1"/>
</dbReference>
<dbReference type="InterPro" id="IPR029039">
    <property type="entry name" value="Flavoprotein-like_sf"/>
</dbReference>
<dbReference type="InterPro" id="IPR020852">
    <property type="entry name" value="RNR_Ib_NrdI_bac"/>
</dbReference>
<dbReference type="InterPro" id="IPR004465">
    <property type="entry name" value="RNR_NrdI"/>
</dbReference>
<dbReference type="NCBIfam" id="TIGR00333">
    <property type="entry name" value="nrdI"/>
    <property type="match status" value="1"/>
</dbReference>
<dbReference type="PANTHER" id="PTHR37297">
    <property type="entry name" value="PROTEIN NRDI"/>
    <property type="match status" value="1"/>
</dbReference>
<dbReference type="PANTHER" id="PTHR37297:SF1">
    <property type="entry name" value="PROTEIN NRDI"/>
    <property type="match status" value="1"/>
</dbReference>
<dbReference type="Pfam" id="PF07972">
    <property type="entry name" value="Flavodoxin_NdrI"/>
    <property type="match status" value="1"/>
</dbReference>
<dbReference type="PIRSF" id="PIRSF005087">
    <property type="entry name" value="NrdI"/>
    <property type="match status" value="1"/>
</dbReference>
<dbReference type="SUPFAM" id="SSF52218">
    <property type="entry name" value="Flavoproteins"/>
    <property type="match status" value="1"/>
</dbReference>
<gene>
    <name evidence="1" type="primary">nrdI</name>
    <name type="ordered locus">SAR0784</name>
</gene>
<proteinExistence type="inferred from homology"/>
<comment type="function">
    <text evidence="1">Probably involved in ribonucleotide reductase function.</text>
</comment>
<comment type="similarity">
    <text evidence="1">Belongs to the NrdI family.</text>
</comment>
<name>NRDI_STAAR</name>
<feature type="chain" id="PRO_0000164337" description="Protein NrdI">
    <location>
        <begin position="1"/>
        <end position="132"/>
    </location>
</feature>
<organism>
    <name type="scientific">Staphylococcus aureus (strain MRSA252)</name>
    <dbReference type="NCBI Taxonomy" id="282458"/>
    <lineage>
        <taxon>Bacteria</taxon>
        <taxon>Bacillati</taxon>
        <taxon>Bacillota</taxon>
        <taxon>Bacilli</taxon>
        <taxon>Bacillales</taxon>
        <taxon>Staphylococcaceae</taxon>
        <taxon>Staphylococcus</taxon>
    </lineage>
</organism>
<accession>Q6GIR1</accession>